<sequence>MHTTQKDTTYTKIFVGGLPYHTTDASLRKYFEVFGEIEEAVVITDRQTGKSRGYGFVTMADRAAAERACKDPNPIIDGRKANVNLAYLGAKPRIMQPGFAFGVQQLHPALIQRPFGIPAHYVYPQAFVQPGVVIPHVQPTAAAASTTPYIDYTGAAYAQYSAAAAAAAAAAAYDQYPYAASPAAAGYVTAGGYGYAVQQPITAAAPGTAAAAAAAAAAAAAFGQYQPQQLQTDRMQ</sequence>
<reference key="1">
    <citation type="journal article" date="2004" name="Nat. Genet.">
        <title>Complete sequencing and characterization of 21,243 full-length human cDNAs.</title>
        <authorList>
            <person name="Ota T."/>
            <person name="Suzuki Y."/>
            <person name="Nishikawa T."/>
            <person name="Otsuki T."/>
            <person name="Sugiyama T."/>
            <person name="Irie R."/>
            <person name="Wakamatsu A."/>
            <person name="Hayashi K."/>
            <person name="Sato H."/>
            <person name="Nagai K."/>
            <person name="Kimura K."/>
            <person name="Makita H."/>
            <person name="Sekine M."/>
            <person name="Obayashi M."/>
            <person name="Nishi T."/>
            <person name="Shibahara T."/>
            <person name="Tanaka T."/>
            <person name="Ishii S."/>
            <person name="Yamamoto J."/>
            <person name="Saito K."/>
            <person name="Kawai Y."/>
            <person name="Isono Y."/>
            <person name="Nakamura Y."/>
            <person name="Nagahari K."/>
            <person name="Murakami K."/>
            <person name="Yasuda T."/>
            <person name="Iwayanagi T."/>
            <person name="Wagatsuma M."/>
            <person name="Shiratori A."/>
            <person name="Sudo H."/>
            <person name="Hosoiri T."/>
            <person name="Kaku Y."/>
            <person name="Kodaira H."/>
            <person name="Kondo H."/>
            <person name="Sugawara M."/>
            <person name="Takahashi M."/>
            <person name="Kanda K."/>
            <person name="Yokoi T."/>
            <person name="Furuya T."/>
            <person name="Kikkawa E."/>
            <person name="Omura Y."/>
            <person name="Abe K."/>
            <person name="Kamihara K."/>
            <person name="Katsuta N."/>
            <person name="Sato K."/>
            <person name="Tanikawa M."/>
            <person name="Yamazaki M."/>
            <person name="Ninomiya K."/>
            <person name="Ishibashi T."/>
            <person name="Yamashita H."/>
            <person name="Murakawa K."/>
            <person name="Fujimori K."/>
            <person name="Tanai H."/>
            <person name="Kimata M."/>
            <person name="Watanabe M."/>
            <person name="Hiraoka S."/>
            <person name="Chiba Y."/>
            <person name="Ishida S."/>
            <person name="Ono Y."/>
            <person name="Takiguchi S."/>
            <person name="Watanabe S."/>
            <person name="Yosida M."/>
            <person name="Hotuta T."/>
            <person name="Kusano J."/>
            <person name="Kanehori K."/>
            <person name="Takahashi-Fujii A."/>
            <person name="Hara H."/>
            <person name="Tanase T.-O."/>
            <person name="Nomura Y."/>
            <person name="Togiya S."/>
            <person name="Komai F."/>
            <person name="Hara R."/>
            <person name="Takeuchi K."/>
            <person name="Arita M."/>
            <person name="Imose N."/>
            <person name="Musashino K."/>
            <person name="Yuuki H."/>
            <person name="Oshima A."/>
            <person name="Sasaki N."/>
            <person name="Aotsuka S."/>
            <person name="Yoshikawa Y."/>
            <person name="Matsunawa H."/>
            <person name="Ichihara T."/>
            <person name="Shiohata N."/>
            <person name="Sano S."/>
            <person name="Moriya S."/>
            <person name="Momiyama H."/>
            <person name="Satoh N."/>
            <person name="Takami S."/>
            <person name="Terashima Y."/>
            <person name="Suzuki O."/>
            <person name="Nakagawa S."/>
            <person name="Senoh A."/>
            <person name="Mizoguchi H."/>
            <person name="Goto Y."/>
            <person name="Shimizu F."/>
            <person name="Wakebe H."/>
            <person name="Hishigaki H."/>
            <person name="Watanabe T."/>
            <person name="Sugiyama A."/>
            <person name="Takemoto M."/>
            <person name="Kawakami B."/>
            <person name="Yamazaki M."/>
            <person name="Watanabe K."/>
            <person name="Kumagai A."/>
            <person name="Itakura S."/>
            <person name="Fukuzumi Y."/>
            <person name="Fujimori Y."/>
            <person name="Komiyama M."/>
            <person name="Tashiro H."/>
            <person name="Tanigami A."/>
            <person name="Fujiwara T."/>
            <person name="Ono T."/>
            <person name="Yamada K."/>
            <person name="Fujii Y."/>
            <person name="Ozaki K."/>
            <person name="Hirao M."/>
            <person name="Ohmori Y."/>
            <person name="Kawabata A."/>
            <person name="Hikiji T."/>
            <person name="Kobatake N."/>
            <person name="Inagaki H."/>
            <person name="Ikema Y."/>
            <person name="Okamoto S."/>
            <person name="Okitani R."/>
            <person name="Kawakami T."/>
            <person name="Noguchi S."/>
            <person name="Itoh T."/>
            <person name="Shigeta K."/>
            <person name="Senba T."/>
            <person name="Matsumura K."/>
            <person name="Nakajima Y."/>
            <person name="Mizuno T."/>
            <person name="Morinaga M."/>
            <person name="Sasaki M."/>
            <person name="Togashi T."/>
            <person name="Oyama M."/>
            <person name="Hata H."/>
            <person name="Watanabe M."/>
            <person name="Komatsu T."/>
            <person name="Mizushima-Sugano J."/>
            <person name="Satoh T."/>
            <person name="Shirai Y."/>
            <person name="Takahashi Y."/>
            <person name="Nakagawa K."/>
            <person name="Okumura K."/>
            <person name="Nagase T."/>
            <person name="Nomura N."/>
            <person name="Kikuchi H."/>
            <person name="Masuho Y."/>
            <person name="Yamashita R."/>
            <person name="Nakai K."/>
            <person name="Yada T."/>
            <person name="Nakamura Y."/>
            <person name="Ohara O."/>
            <person name="Isogai T."/>
            <person name="Sugano S."/>
        </authorList>
    </citation>
    <scope>NUCLEOTIDE SEQUENCE [LARGE SCALE MRNA] (ISOFORM 2)</scope>
    <source>
        <tissue>Fetal brain</tissue>
        <tissue>Hippocampus</tissue>
    </source>
</reference>
<reference key="2">
    <citation type="submission" date="2004-02" db="EMBL/GenBank/DDBJ databases">
        <authorList>
            <person name="Li H."/>
            <person name="Zhong G."/>
            <person name="Zhou G."/>
            <person name="Wang C."/>
            <person name="Shen C."/>
            <person name="Ke R."/>
            <person name="Li M."/>
            <person name="Xiao W."/>
            <person name="Lin L."/>
            <person name="Yang S."/>
        </authorList>
    </citation>
    <scope>NUCLEOTIDE SEQUENCE [LARGE SCALE MRNA] (ISOFORM 1)</scope>
</reference>
<reference key="3">
    <citation type="journal article" date="2003" name="Nature">
        <title>The DNA sequence and analysis of human chromosome 6.</title>
        <authorList>
            <person name="Mungall A.J."/>
            <person name="Palmer S.A."/>
            <person name="Sims S.K."/>
            <person name="Edwards C.A."/>
            <person name="Ashurst J.L."/>
            <person name="Wilming L."/>
            <person name="Jones M.C."/>
            <person name="Horton R."/>
            <person name="Hunt S.E."/>
            <person name="Scott C.E."/>
            <person name="Gilbert J.G.R."/>
            <person name="Clamp M.E."/>
            <person name="Bethel G."/>
            <person name="Milne S."/>
            <person name="Ainscough R."/>
            <person name="Almeida J.P."/>
            <person name="Ambrose K.D."/>
            <person name="Andrews T.D."/>
            <person name="Ashwell R.I.S."/>
            <person name="Babbage A.K."/>
            <person name="Bagguley C.L."/>
            <person name="Bailey J."/>
            <person name="Banerjee R."/>
            <person name="Barker D.J."/>
            <person name="Barlow K.F."/>
            <person name="Bates K."/>
            <person name="Beare D.M."/>
            <person name="Beasley H."/>
            <person name="Beasley O."/>
            <person name="Bird C.P."/>
            <person name="Blakey S.E."/>
            <person name="Bray-Allen S."/>
            <person name="Brook J."/>
            <person name="Brown A.J."/>
            <person name="Brown J.Y."/>
            <person name="Burford D.C."/>
            <person name="Burrill W."/>
            <person name="Burton J."/>
            <person name="Carder C."/>
            <person name="Carter N.P."/>
            <person name="Chapman J.C."/>
            <person name="Clark S.Y."/>
            <person name="Clark G."/>
            <person name="Clee C.M."/>
            <person name="Clegg S."/>
            <person name="Cobley V."/>
            <person name="Collier R.E."/>
            <person name="Collins J.E."/>
            <person name="Colman L.K."/>
            <person name="Corby N.R."/>
            <person name="Coville G.J."/>
            <person name="Culley K.M."/>
            <person name="Dhami P."/>
            <person name="Davies J."/>
            <person name="Dunn M."/>
            <person name="Earthrowl M.E."/>
            <person name="Ellington A.E."/>
            <person name="Evans K.A."/>
            <person name="Faulkner L."/>
            <person name="Francis M.D."/>
            <person name="Frankish A."/>
            <person name="Frankland J."/>
            <person name="French L."/>
            <person name="Garner P."/>
            <person name="Garnett J."/>
            <person name="Ghori M.J."/>
            <person name="Gilby L.M."/>
            <person name="Gillson C.J."/>
            <person name="Glithero R.J."/>
            <person name="Grafham D.V."/>
            <person name="Grant M."/>
            <person name="Gribble S."/>
            <person name="Griffiths C."/>
            <person name="Griffiths M.N.D."/>
            <person name="Hall R."/>
            <person name="Halls K.S."/>
            <person name="Hammond S."/>
            <person name="Harley J.L."/>
            <person name="Hart E.A."/>
            <person name="Heath P.D."/>
            <person name="Heathcott R."/>
            <person name="Holmes S.J."/>
            <person name="Howden P.J."/>
            <person name="Howe K.L."/>
            <person name="Howell G.R."/>
            <person name="Huckle E."/>
            <person name="Humphray S.J."/>
            <person name="Humphries M.D."/>
            <person name="Hunt A.R."/>
            <person name="Johnson C.M."/>
            <person name="Joy A.A."/>
            <person name="Kay M."/>
            <person name="Keenan S.J."/>
            <person name="Kimberley A.M."/>
            <person name="King A."/>
            <person name="Laird G.K."/>
            <person name="Langford C."/>
            <person name="Lawlor S."/>
            <person name="Leongamornlert D.A."/>
            <person name="Leversha M."/>
            <person name="Lloyd C.R."/>
            <person name="Lloyd D.M."/>
            <person name="Loveland J.E."/>
            <person name="Lovell J."/>
            <person name="Martin S."/>
            <person name="Mashreghi-Mohammadi M."/>
            <person name="Maslen G.L."/>
            <person name="Matthews L."/>
            <person name="McCann O.T."/>
            <person name="McLaren S.J."/>
            <person name="McLay K."/>
            <person name="McMurray A."/>
            <person name="Moore M.J.F."/>
            <person name="Mullikin J.C."/>
            <person name="Niblett D."/>
            <person name="Nickerson T."/>
            <person name="Novik K.L."/>
            <person name="Oliver K."/>
            <person name="Overton-Larty E.K."/>
            <person name="Parker A."/>
            <person name="Patel R."/>
            <person name="Pearce A.V."/>
            <person name="Peck A.I."/>
            <person name="Phillimore B.J.C.T."/>
            <person name="Phillips S."/>
            <person name="Plumb R.W."/>
            <person name="Porter K.M."/>
            <person name="Ramsey Y."/>
            <person name="Ranby S.A."/>
            <person name="Rice C.M."/>
            <person name="Ross M.T."/>
            <person name="Searle S.M."/>
            <person name="Sehra H.K."/>
            <person name="Sheridan E."/>
            <person name="Skuce C.D."/>
            <person name="Smith S."/>
            <person name="Smith M."/>
            <person name="Spraggon L."/>
            <person name="Squares S.L."/>
            <person name="Steward C.A."/>
            <person name="Sycamore N."/>
            <person name="Tamlyn-Hall G."/>
            <person name="Tester J."/>
            <person name="Theaker A.J."/>
            <person name="Thomas D.W."/>
            <person name="Thorpe A."/>
            <person name="Tracey A."/>
            <person name="Tromans A."/>
            <person name="Tubby B."/>
            <person name="Wall M."/>
            <person name="Wallis J.M."/>
            <person name="West A.P."/>
            <person name="White S.S."/>
            <person name="Whitehead S.L."/>
            <person name="Whittaker H."/>
            <person name="Wild A."/>
            <person name="Willey D.J."/>
            <person name="Wilmer T.E."/>
            <person name="Wood J.M."/>
            <person name="Wray P.W."/>
            <person name="Wyatt J.C."/>
            <person name="Young L."/>
            <person name="Younger R.M."/>
            <person name="Bentley D.R."/>
            <person name="Coulson A."/>
            <person name="Durbin R.M."/>
            <person name="Hubbard T."/>
            <person name="Sulston J.E."/>
            <person name="Dunham I."/>
            <person name="Rogers J."/>
            <person name="Beck S."/>
        </authorList>
    </citation>
    <scope>NUCLEOTIDE SEQUENCE [LARGE SCALE GENOMIC DNA]</scope>
</reference>
<reference key="4">
    <citation type="journal article" date="2004" name="Genome Res.">
        <title>The status, quality, and expansion of the NIH full-length cDNA project: the Mammalian Gene Collection (MGC).</title>
        <authorList>
            <consortium name="The MGC Project Team"/>
        </authorList>
    </citation>
    <scope>NUCLEOTIDE SEQUENCE [LARGE SCALE MRNA] (ISOFORM 2)</scope>
    <source>
        <tissue>Brain cortex</tissue>
    </source>
</reference>
<reference key="5">
    <citation type="journal article" date="2009" name="Stem Cells">
        <title>Global expression profile of highly enriched cardiomyocytes derived from human embryonic stem cells.</title>
        <authorList>
            <person name="Xu X.Q."/>
            <person name="Soo S.Y."/>
            <person name="Sun W."/>
            <person name="Zweigerdt R."/>
        </authorList>
    </citation>
    <scope>INDUCTION</scope>
</reference>
<reference key="6">
    <citation type="journal article" date="2010" name="Genes Cells">
        <title>RNA-binding motif protein 24 regulates myogenin expression and promotes myogenic differentiation.</title>
        <authorList>
            <person name="Jin D."/>
            <person name="Hidaka K."/>
            <person name="Shirai M."/>
            <person name="Morisaki T."/>
        </authorList>
    </citation>
    <scope>FUNCTION</scope>
    <scope>RNA-BINDING</scope>
</reference>
<reference key="7">
    <citation type="journal article" date="2012" name="Cardiovasc. Res.">
        <title>RNA-binding protein RBM24 is required for sarcomere assembly and heart contractility.</title>
        <authorList>
            <person name="Poon K.L."/>
            <person name="Tan K.T."/>
            <person name="Wei Y.Y."/>
            <person name="Ng C.P."/>
            <person name="Colman A."/>
            <person name="Korzh V."/>
            <person name="Xu X.Q."/>
        </authorList>
    </citation>
    <scope>TISSUE SPECIFICITY</scope>
</reference>
<reference key="8">
    <citation type="journal article" date="2014" name="Dev. Cell">
        <title>RBM24 is a major regulator of muscle-specific alternative splicing.</title>
        <authorList>
            <person name="Yang J."/>
            <person name="Hung L.H."/>
            <person name="Licht T."/>
            <person name="Kostin S."/>
            <person name="Looso M."/>
            <person name="Khrameeva E."/>
            <person name="Bindereif A."/>
            <person name="Schneider A."/>
            <person name="Braun T."/>
        </authorList>
    </citation>
    <scope>TISSUE SPECIFICITY</scope>
</reference>
<reference key="9">
    <citation type="journal article" date="2014" name="J. Biol. Chem.">
        <title>Rbm24, an RNA-binding protein and a target of p53, regulates p21 expression via mRNA stability.</title>
        <authorList>
            <person name="Jiang Y."/>
            <person name="Zhang M."/>
            <person name="Qian Y."/>
            <person name="Xu E."/>
            <person name="Zhang J."/>
            <person name="Chen X."/>
        </authorList>
    </citation>
    <scope>FUNCTION</scope>
    <scope>RNA-BINDING</scope>
    <scope>INDUCTION</scope>
    <scope>DOMAIN</scope>
</reference>
<reference key="10">
    <citation type="journal article" date="2014" name="Mol. Cancer Res.">
        <title>RNA-binding protein RBM24 regulates p63 expression via mRNA stability.</title>
        <authorList>
            <person name="Xu E."/>
            <person name="Zhang J."/>
            <person name="Zhang M."/>
            <person name="Jiang Y."/>
            <person name="Cho S.J."/>
            <person name="Chen X."/>
        </authorList>
    </citation>
    <scope>FUNCTION</scope>
    <scope>RNA-BINDING</scope>
</reference>
<reference key="11">
    <citation type="journal article" date="2016" name="Stem Cells">
        <title>Rbm24 regulates alternative splicing switch in embryonic stem cell cardiac lineage differentiation.</title>
        <authorList>
            <person name="Zhang T."/>
            <person name="Lin Y."/>
            <person name="Liu J."/>
            <person name="Zhang Z.G."/>
            <person name="Fu W."/>
            <person name="Guo L.Y."/>
            <person name="Pan L."/>
            <person name="Kong X."/>
            <person name="Zhang M.K."/>
            <person name="Lu Y.H."/>
            <person name="Huang Z.R."/>
            <person name="Xie Q."/>
            <person name="Li W.H."/>
            <person name="Xu X.Q."/>
        </authorList>
    </citation>
    <scope>FUNCTION</scope>
    <scope>INDUCTION</scope>
</reference>
<reference key="12">
    <citation type="journal article" date="2018" name="Cell Death Differ.">
        <title>Rbm24, a target of p53, is necessary for proper expression of p53 and heart development.</title>
        <authorList>
            <person name="Zhang M."/>
            <person name="Zhang Y."/>
            <person name="Xu E."/>
            <person name="Mohibi S."/>
            <person name="de Anda D.M."/>
            <person name="Jiang Y."/>
            <person name="Zhang J."/>
            <person name="Chen X."/>
        </authorList>
    </citation>
    <scope>FUNCTION</scope>
    <scope>INTERACTION WITH EIF4E</scope>
    <scope>RNA-BINDING</scope>
    <scope>MUTAGENESIS OF SER-181</scope>
    <scope>DOMAIN</scope>
</reference>
<reference key="13">
    <citation type="journal article" date="2018" name="Int. J. Biochem. Cell Biol.">
        <title>Global profiling of Rbm24 bound RNAs uncovers a multi-tasking RNA binding protein.</title>
        <authorList>
            <person name="Lin Y."/>
            <person name="Tan K.T."/>
            <person name="Liu J."/>
            <person name="Kong X."/>
            <person name="Huang Z."/>
            <person name="Xu X.Q."/>
        </authorList>
    </citation>
    <scope>FUNCTION</scope>
    <scope>RNA-BINDING</scope>
</reference>
<reference key="14">
    <citation type="journal article" date="2018" name="Protein Cell">
        <title>RNA binding protein 24 regulates the translation and replication of hepatitis C virus.</title>
        <authorList>
            <person name="Cao H."/>
            <person name="Zhao K."/>
            <person name="Yao Y."/>
            <person name="Guo J."/>
            <person name="Gao X."/>
            <person name="Yang Q."/>
            <person name="Guo M."/>
            <person name="Zhu W."/>
            <person name="Wang Y."/>
            <person name="Wu C."/>
            <person name="Chen J."/>
            <person name="Zhou Y."/>
            <person name="Hu X."/>
            <person name="Lu M."/>
            <person name="Chen X."/>
            <person name="Pei R."/>
        </authorList>
    </citation>
    <scope>INTERACTION WITH HCV SERINE PROTEASE/HELICASE NS3 AND MATURE CORE PROTEIN (MICROBIAL INFECTION)</scope>
    <scope>FUNCTION (MICROBIAL INFECTION)</scope>
</reference>
<comment type="function">
    <text evidence="1 2 6 8 9 11 12 13">Multifunctional RNA-binding protein involved in the regulation of pre-mRNA splicing, mRNA stability and mRNA translation important for cell fate decision and differentiation (PubMed:20977548, PubMed:24375645, PubMed:29104163, PubMed:29358667). Plays a major role in pre-mRNA alternative splicing regulation (PubMed:26990106, PubMed:29104163). Mediates preferentially muscle-specific exon inclusion in numerous mRNAs important for striated cardiac and skeletal muscle cell differentiation (PubMed:29104163). Binds to intronic splicing enhancer (ISE) composed of stretches of GU-rich motifs localized in flanking intron of exon that will be included by alternative splicing (By similarity). Involved in embryonic stem cell (ESC) transition to cardiac cell differentiation by promoting pre-mRNA alternative splicing events of several pluripotency and/or differentiation genes (PubMed:26990106). Plays a role in the regulation of mRNA stability (PubMed:20977548, PubMed:24356969, PubMed:24375645, PubMed:29104163). Binds to 3'-untranslated region (UTR) AU-rich elements in target transcripts, such as CDKN1A and MYOG, leading to maintain their stabilities (PubMed:20977548, PubMed:24356969). Involved in myogenic differentiation by regulating MYOG levels (PubMed:20977548). Binds to multiple regions in the mRNA 3'-UTR of TP63 isoform 2, hence inducing its destabilization (PubMed:24375645). Also promotes the destabilization of the CHRM2 mRNA via its binding to a region in the coding sequence (PubMed:29104163). Plays a role in the regulation of mRNA translation (PubMed:29358667). Mediates repression of p53/TP53 mRNA translation through its binding to U-rich element in the 3'-UTR, hence preventing EIF4E from binding to p53/TP53 mRNA and translation initiation (PubMed:29358667). Binds to a huge amount of mRNAs (PubMed:29104163). Required for embryonic heart development, sarcomer and M-band formation in striated muscles (By similarity). Together with RBM20, promotes the expression of short isoforms of PDLIM5/ENH in cardiomyocytes (By similarity).</text>
</comment>
<comment type="function">
    <text evidence="14">(Microbial infection) Promotes hepatitis C virus (HCV) replication over translation through the inhibition of viral protein expression. Decreases viral translation by linking viral 5'- and 3'-UTRs, blocking 80S ribosome assembly on the viral IRES and enhancing the interaction of the mature core protein and 5'-UTR.</text>
</comment>
<comment type="subunit">
    <text evidence="13">Interacts with EIF4E; this interaction prevents EIF4E from binding to p53/TP53 mRNA and inhibits the assembly of translation initiation complex (PubMed:29358667).</text>
</comment>
<comment type="subunit">
    <text evidence="14">(Microbial infection) Interacts with HCV mature core protein; this interaction, which enhances the interaction of Core with 5'-UTR may favor viral replication over translation.</text>
</comment>
<comment type="subunit">
    <text evidence="14">(Microbial infection) Interacts with HCV Serine protease/helicase NS3.</text>
</comment>
<comment type="interaction">
    <interactant intactId="EBI-12224445">
        <id>Q9BX46-2</id>
    </interactant>
    <interactant intactId="EBI-12809220">
        <id>Q5SWW7</id>
        <label>C10orf55</label>
    </interactant>
    <organismsDiffer>false</organismsDiffer>
    <experiments>3</experiments>
</comment>
<comment type="interaction">
    <interactant intactId="EBI-12224445">
        <id>Q9BX46-2</id>
    </interactant>
    <interactant intactId="EBI-724310">
        <id>Q15038</id>
        <label>DAZAP2</label>
    </interactant>
    <organismsDiffer>false</organismsDiffer>
    <experiments>3</experiments>
</comment>
<comment type="interaction">
    <interactant intactId="EBI-12224445">
        <id>Q9BX46-2</id>
    </interactant>
    <interactant intactId="EBI-943588">
        <id>Q16633</id>
        <label>POU2AF1</label>
    </interactant>
    <organismsDiffer>false</organismsDiffer>
    <experiments>3</experiments>
</comment>
<comment type="interaction">
    <interactant intactId="EBI-12224445">
        <id>Q9BX46-2</id>
    </interactant>
    <interactant intactId="EBI-740343">
        <id>Q93062-3</id>
        <label>RBPMS</label>
    </interactant>
    <organismsDiffer>false</organismsDiffer>
    <experiments>3</experiments>
</comment>
<comment type="interaction">
    <interactant intactId="EBI-12224445">
        <id>Q9BX46-2</id>
    </interactant>
    <interactant intactId="EBI-947187">
        <id>Q9UHD9</id>
        <label>UBQLN2</label>
    </interactant>
    <organismsDiffer>false</organismsDiffer>
    <experiments>3</experiments>
</comment>
<comment type="subcellular location">
    <subcellularLocation>
        <location evidence="3">Nucleus</location>
    </subcellularLocation>
    <subcellularLocation>
        <location evidence="1">Cytoplasm</location>
    </subcellularLocation>
</comment>
<comment type="alternative products">
    <event type="alternative splicing"/>
    <isoform>
        <id>Q9BX46-1</id>
        <name>1</name>
        <sequence type="displayed"/>
    </isoform>
    <isoform>
        <id>Q9BX46-2</id>
        <name>2</name>
        <sequence type="described" ref="VSP_022526"/>
    </isoform>
    <isoform>
        <id>Q9BX46-5</id>
        <name>3</name>
        <sequence type="described" ref="VSP_046775"/>
    </isoform>
</comment>
<comment type="tissue specificity">
    <text evidence="7 10">Expressed in fetal and adult heart and skeletal muscles (PubMed:22345307, PubMed:25313962).</text>
</comment>
<comment type="induction">
    <text evidence="5 8 11">By p53/TP53 following DNA damage (at protein level) (PubMed:24356969). Up-regulated during embryonic stem cell (ESC) differentiation into cardiomyocytes (PubMed:19658189, PubMed:26990106).</text>
</comment>
<comment type="domain">
    <text evidence="8 13">The RRM domain is necessary for mRNA stability and mRNA translation regulation (PubMed:24356969, PubMed:29358667).</text>
</comment>
<comment type="sequence caution" evidence="18">
    <conflict type="miscellaneous discrepancy">
        <sequence resource="EMBL-CDS" id="BAC04474"/>
    </conflict>
    <text>Unlikely isoform. Aberrant splice sites.</text>
</comment>
<keyword id="KW-0025">Alternative splicing</keyword>
<keyword id="KW-0963">Cytoplasm</keyword>
<keyword id="KW-0221">Differentiation</keyword>
<keyword id="KW-0507">mRNA processing</keyword>
<keyword id="KW-0508">mRNA splicing</keyword>
<keyword id="KW-0539">Nucleus</keyword>
<keyword id="KW-1267">Proteomics identification</keyword>
<keyword id="KW-1185">Reference proteome</keyword>
<keyword id="KW-0694">RNA-binding</keyword>
<keyword id="KW-0810">Translation regulation</keyword>
<dbReference type="EMBL" id="AK055391">
    <property type="protein sequence ID" value="BAB70914.1"/>
    <property type="molecule type" value="mRNA"/>
</dbReference>
<dbReference type="EMBL" id="AK095016">
    <property type="protein sequence ID" value="BAC04474.1"/>
    <property type="status" value="ALT_SEQ"/>
    <property type="molecule type" value="mRNA"/>
</dbReference>
<dbReference type="EMBL" id="AY547318">
    <property type="protein sequence ID" value="AAS55633.1"/>
    <property type="molecule type" value="mRNA"/>
</dbReference>
<dbReference type="EMBL" id="AL136305">
    <property type="status" value="NOT_ANNOTATED_CDS"/>
    <property type="molecule type" value="Genomic_DNA"/>
</dbReference>
<dbReference type="EMBL" id="BC104810">
    <property type="protein sequence ID" value="AAI04811.1"/>
    <property type="molecule type" value="mRNA"/>
</dbReference>
<dbReference type="EMBL" id="BC104808">
    <property type="protein sequence ID" value="AAI04809.1"/>
    <property type="molecule type" value="mRNA"/>
</dbReference>
<dbReference type="CCDS" id="CCDS4538.1">
    <molecule id="Q9BX46-2"/>
</dbReference>
<dbReference type="CCDS" id="CCDS47378.1">
    <molecule id="Q9BX46-1"/>
</dbReference>
<dbReference type="CCDS" id="CCDS47379.1">
    <molecule id="Q9BX46-5"/>
</dbReference>
<dbReference type="RefSeq" id="NP_001137413.1">
    <molecule id="Q9BX46-5"/>
    <property type="nucleotide sequence ID" value="NM_001143941.1"/>
</dbReference>
<dbReference type="RefSeq" id="NP_001137414.1">
    <molecule id="Q9BX46-1"/>
    <property type="nucleotide sequence ID" value="NM_001143942.2"/>
</dbReference>
<dbReference type="RefSeq" id="NP_694565.1">
    <molecule id="Q9BX46-2"/>
    <property type="nucleotide sequence ID" value="NM_153020.2"/>
</dbReference>
<dbReference type="SMR" id="Q9BX46"/>
<dbReference type="BioGRID" id="128744">
    <property type="interactions" value="47"/>
</dbReference>
<dbReference type="FunCoup" id="Q9BX46">
    <property type="interactions" value="2178"/>
</dbReference>
<dbReference type="IntAct" id="Q9BX46">
    <property type="interactions" value="31"/>
</dbReference>
<dbReference type="STRING" id="9606.ENSP00000368341"/>
<dbReference type="GlyGen" id="Q9BX46">
    <property type="glycosylation" value="2 sites, 1 O-linked glycan (1 site)"/>
</dbReference>
<dbReference type="iPTMnet" id="Q9BX46"/>
<dbReference type="PhosphoSitePlus" id="Q9BX46"/>
<dbReference type="BioMuta" id="RBM24"/>
<dbReference type="DMDM" id="74761312"/>
<dbReference type="jPOST" id="Q9BX46"/>
<dbReference type="MassIVE" id="Q9BX46"/>
<dbReference type="PaxDb" id="9606-ENSP00000368341"/>
<dbReference type="PeptideAtlas" id="Q9BX46"/>
<dbReference type="Pumba" id="Q9BX46"/>
<dbReference type="Antibodypedia" id="44354">
    <property type="antibodies" value="87 antibodies from 20 providers"/>
</dbReference>
<dbReference type="DNASU" id="221662"/>
<dbReference type="Ensembl" id="ENST00000318204.5">
    <molecule id="Q9BX46-2"/>
    <property type="protein sequence ID" value="ENSP00000319551.5"/>
    <property type="gene ID" value="ENSG00000112183.15"/>
</dbReference>
<dbReference type="Ensembl" id="ENST00000379052.10">
    <molecule id="Q9BX46-1"/>
    <property type="protein sequence ID" value="ENSP00000368341.5"/>
    <property type="gene ID" value="ENSG00000112183.15"/>
</dbReference>
<dbReference type="Ensembl" id="ENST00000425446.6">
    <molecule id="Q9BX46-5"/>
    <property type="protein sequence ID" value="ENSP00000396898.2"/>
    <property type="gene ID" value="ENSG00000112183.15"/>
</dbReference>
<dbReference type="GeneID" id="221662"/>
<dbReference type="KEGG" id="hsa:221662"/>
<dbReference type="MANE-Select" id="ENST00000379052.10">
    <property type="protein sequence ID" value="ENSP00000368341.5"/>
    <property type="RefSeq nucleotide sequence ID" value="NM_001143942.2"/>
    <property type="RefSeq protein sequence ID" value="NP_001137414.1"/>
</dbReference>
<dbReference type="UCSC" id="uc003nbz.5">
    <molecule id="Q9BX46-1"/>
    <property type="organism name" value="human"/>
</dbReference>
<dbReference type="AGR" id="HGNC:21539"/>
<dbReference type="CTD" id="221662"/>
<dbReference type="DisGeNET" id="221662"/>
<dbReference type="GeneCards" id="RBM24"/>
<dbReference type="HGNC" id="HGNC:21539">
    <property type="gene designation" value="RBM24"/>
</dbReference>
<dbReference type="HPA" id="ENSG00000112183">
    <property type="expression patterns" value="Group enriched (heart muscle, skeletal muscle, tongue)"/>
</dbReference>
<dbReference type="MIM" id="617603">
    <property type="type" value="gene"/>
</dbReference>
<dbReference type="neXtProt" id="NX_Q9BX46"/>
<dbReference type="OpenTargets" id="ENSG00000112183"/>
<dbReference type="PharmGKB" id="PA134964569"/>
<dbReference type="VEuPathDB" id="HostDB:ENSG00000112183"/>
<dbReference type="eggNOG" id="KOG0149">
    <property type="taxonomic scope" value="Eukaryota"/>
</dbReference>
<dbReference type="eggNOG" id="KOG4205">
    <property type="taxonomic scope" value="Eukaryota"/>
</dbReference>
<dbReference type="GeneTree" id="ENSGT00940000156245"/>
<dbReference type="HOGENOM" id="CLU_065652_0_1_1"/>
<dbReference type="InParanoid" id="Q9BX46"/>
<dbReference type="OMA" id="IPAHYMY"/>
<dbReference type="OrthoDB" id="4207594at2759"/>
<dbReference type="PAN-GO" id="Q9BX46">
    <property type="GO annotations" value="6 GO annotations based on evolutionary models"/>
</dbReference>
<dbReference type="PhylomeDB" id="Q9BX46"/>
<dbReference type="TreeFam" id="TF314235"/>
<dbReference type="PathwayCommons" id="Q9BX46"/>
<dbReference type="SignaLink" id="Q9BX46"/>
<dbReference type="BioGRID-ORCS" id="221662">
    <property type="hits" value="14 hits in 1151 CRISPR screens"/>
</dbReference>
<dbReference type="GenomeRNAi" id="221662"/>
<dbReference type="Pharos" id="Q9BX46">
    <property type="development level" value="Tbio"/>
</dbReference>
<dbReference type="PRO" id="PR:Q9BX46"/>
<dbReference type="Proteomes" id="UP000005640">
    <property type="component" value="Chromosome 6"/>
</dbReference>
<dbReference type="RNAct" id="Q9BX46">
    <property type="molecule type" value="protein"/>
</dbReference>
<dbReference type="Bgee" id="ENSG00000112183">
    <property type="expression patterns" value="Expressed in tibialis anterior and 157 other cell types or tissues"/>
</dbReference>
<dbReference type="ExpressionAtlas" id="Q9BX46">
    <property type="expression patterns" value="baseline and differential"/>
</dbReference>
<dbReference type="GO" id="GO:0005829">
    <property type="term" value="C:cytosol"/>
    <property type="evidence" value="ECO:0000314"/>
    <property type="project" value="HPA"/>
</dbReference>
<dbReference type="GO" id="GO:0005654">
    <property type="term" value="C:nucleoplasm"/>
    <property type="evidence" value="ECO:0000314"/>
    <property type="project" value="HPA"/>
</dbReference>
<dbReference type="GO" id="GO:0005634">
    <property type="term" value="C:nucleus"/>
    <property type="evidence" value="ECO:0000318"/>
    <property type="project" value="GO_Central"/>
</dbReference>
<dbReference type="GO" id="GO:0035925">
    <property type="term" value="F:mRNA 3'-UTR AU-rich region binding"/>
    <property type="evidence" value="ECO:0000314"/>
    <property type="project" value="UniProtKB"/>
</dbReference>
<dbReference type="GO" id="GO:0003730">
    <property type="term" value="F:mRNA 3'-UTR binding"/>
    <property type="evidence" value="ECO:0000314"/>
    <property type="project" value="UniProtKB"/>
</dbReference>
<dbReference type="GO" id="GO:1990715">
    <property type="term" value="F:mRNA CDS binding"/>
    <property type="evidence" value="ECO:0000314"/>
    <property type="project" value="UniProtKB"/>
</dbReference>
<dbReference type="GO" id="GO:0097157">
    <property type="term" value="F:pre-mRNA intronic binding"/>
    <property type="evidence" value="ECO:0000250"/>
    <property type="project" value="UniProtKB"/>
</dbReference>
<dbReference type="GO" id="GO:1990825">
    <property type="term" value="F:sequence-specific mRNA binding"/>
    <property type="evidence" value="ECO:0000314"/>
    <property type="project" value="UniProtKB"/>
</dbReference>
<dbReference type="GO" id="GO:0061158">
    <property type="term" value="P:3'-UTR-mediated mRNA destabilization"/>
    <property type="evidence" value="ECO:0000314"/>
    <property type="project" value="UniProtKB"/>
</dbReference>
<dbReference type="GO" id="GO:0030154">
    <property type="term" value="P:cell differentiation"/>
    <property type="evidence" value="ECO:0007669"/>
    <property type="project" value="UniProtKB-KW"/>
</dbReference>
<dbReference type="GO" id="GO:0006974">
    <property type="term" value="P:DNA damage response"/>
    <property type="evidence" value="ECO:0000315"/>
    <property type="project" value="UniProtKB"/>
</dbReference>
<dbReference type="GO" id="GO:0003197">
    <property type="term" value="P:endocardial cushion development"/>
    <property type="evidence" value="ECO:0007669"/>
    <property type="project" value="Ensembl"/>
</dbReference>
<dbReference type="GO" id="GO:0061157">
    <property type="term" value="P:mRNA destabilization"/>
    <property type="evidence" value="ECO:0000315"/>
    <property type="project" value="UniProtKB"/>
</dbReference>
<dbReference type="GO" id="GO:0006397">
    <property type="term" value="P:mRNA processing"/>
    <property type="evidence" value="ECO:0007669"/>
    <property type="project" value="UniProtKB-KW"/>
</dbReference>
<dbReference type="GO" id="GO:0048255">
    <property type="term" value="P:mRNA stabilization"/>
    <property type="evidence" value="ECO:0000315"/>
    <property type="project" value="UniProtKB"/>
</dbReference>
<dbReference type="GO" id="GO:2000766">
    <property type="term" value="P:negative regulation of cytoplasmic translation"/>
    <property type="evidence" value="ECO:0000315"/>
    <property type="project" value="UniProtKB"/>
</dbReference>
<dbReference type="GO" id="GO:1905870">
    <property type="term" value="P:positive regulation of 3'-UTR-mediated mRNA stabilization"/>
    <property type="evidence" value="ECO:0000315"/>
    <property type="project" value="UniProtKB"/>
</dbReference>
<dbReference type="GO" id="GO:0045663">
    <property type="term" value="P:positive regulation of myoblast differentiation"/>
    <property type="evidence" value="ECO:0000250"/>
    <property type="project" value="UniProtKB"/>
</dbReference>
<dbReference type="GO" id="GO:0010831">
    <property type="term" value="P:positive regulation of myotube differentiation"/>
    <property type="evidence" value="ECO:0000315"/>
    <property type="project" value="UniProtKB"/>
</dbReference>
<dbReference type="GO" id="GO:1902811">
    <property type="term" value="P:positive regulation of skeletal muscle fiber differentiation"/>
    <property type="evidence" value="ECO:0000250"/>
    <property type="project" value="UniProtKB"/>
</dbReference>
<dbReference type="GO" id="GO:2000738">
    <property type="term" value="P:positive regulation of stem cell differentiation"/>
    <property type="evidence" value="ECO:0000315"/>
    <property type="project" value="UniProtKB"/>
</dbReference>
<dbReference type="GO" id="GO:0000381">
    <property type="term" value="P:regulation of alternative mRNA splicing, via spliceosome"/>
    <property type="evidence" value="ECO:0000315"/>
    <property type="project" value="UniProtKB"/>
</dbReference>
<dbReference type="GO" id="GO:0043488">
    <property type="term" value="P:regulation of mRNA stability"/>
    <property type="evidence" value="ECO:0000250"/>
    <property type="project" value="UniProtKB"/>
</dbReference>
<dbReference type="GO" id="GO:0010830">
    <property type="term" value="P:regulation of myotube differentiation"/>
    <property type="evidence" value="ECO:0000250"/>
    <property type="project" value="UniProtKB"/>
</dbReference>
<dbReference type="GO" id="GO:0008380">
    <property type="term" value="P:RNA splicing"/>
    <property type="evidence" value="ECO:0007669"/>
    <property type="project" value="UniProtKB-KW"/>
</dbReference>
<dbReference type="CDD" id="cd12384">
    <property type="entry name" value="RRM_RBM24_RBM38_like"/>
    <property type="match status" value="1"/>
</dbReference>
<dbReference type="FunFam" id="3.30.70.330:FF:000077">
    <property type="entry name" value="RNA-binding motif protein 24"/>
    <property type="match status" value="1"/>
</dbReference>
<dbReference type="Gene3D" id="3.30.70.330">
    <property type="match status" value="1"/>
</dbReference>
<dbReference type="InterPro" id="IPR012677">
    <property type="entry name" value="Nucleotide-bd_a/b_plait_sf"/>
</dbReference>
<dbReference type="InterPro" id="IPR035979">
    <property type="entry name" value="RBD_domain_sf"/>
</dbReference>
<dbReference type="InterPro" id="IPR050886">
    <property type="entry name" value="RNA-binding_reg"/>
</dbReference>
<dbReference type="InterPro" id="IPR000504">
    <property type="entry name" value="RRM_dom"/>
</dbReference>
<dbReference type="PANTHER" id="PTHR48024">
    <property type="entry name" value="GEO13361P1-RELATED"/>
    <property type="match status" value="1"/>
</dbReference>
<dbReference type="PANTHER" id="PTHR48024:SF10">
    <property type="entry name" value="RNA-BINDING PROTEIN 24"/>
    <property type="match status" value="1"/>
</dbReference>
<dbReference type="Pfam" id="PF00076">
    <property type="entry name" value="RRM_1"/>
    <property type="match status" value="1"/>
</dbReference>
<dbReference type="SMART" id="SM00360">
    <property type="entry name" value="RRM"/>
    <property type="match status" value="1"/>
</dbReference>
<dbReference type="SUPFAM" id="SSF54928">
    <property type="entry name" value="RNA-binding domain, RBD"/>
    <property type="match status" value="1"/>
</dbReference>
<dbReference type="PROSITE" id="PS50102">
    <property type="entry name" value="RRM"/>
    <property type="match status" value="1"/>
</dbReference>
<gene>
    <name evidence="19" type="primary">RBM24</name>
    <name type="synonym">RNPC6</name>
</gene>
<name>RBM24_HUMAN</name>
<evidence type="ECO:0000250" key="1">
    <source>
        <dbReference type="UniProtKB" id="D3Z4I3"/>
    </source>
</evidence>
<evidence type="ECO:0000250" key="2">
    <source>
        <dbReference type="UniProtKB" id="M0R7T6"/>
    </source>
</evidence>
<evidence type="ECO:0000250" key="3">
    <source>
        <dbReference type="UniProtKB" id="Q6GQD3"/>
    </source>
</evidence>
<evidence type="ECO:0000255" key="4">
    <source>
        <dbReference type="PROSITE-ProRule" id="PRU00176"/>
    </source>
</evidence>
<evidence type="ECO:0000269" key="5">
    <source>
    </source>
</evidence>
<evidence type="ECO:0000269" key="6">
    <source>
    </source>
</evidence>
<evidence type="ECO:0000269" key="7">
    <source>
    </source>
</evidence>
<evidence type="ECO:0000269" key="8">
    <source>
    </source>
</evidence>
<evidence type="ECO:0000269" key="9">
    <source>
    </source>
</evidence>
<evidence type="ECO:0000269" key="10">
    <source>
    </source>
</evidence>
<evidence type="ECO:0000269" key="11">
    <source>
    </source>
</evidence>
<evidence type="ECO:0000269" key="12">
    <source>
    </source>
</evidence>
<evidence type="ECO:0000269" key="13">
    <source>
    </source>
</evidence>
<evidence type="ECO:0000269" key="14">
    <source>
    </source>
</evidence>
<evidence type="ECO:0000303" key="15">
    <source>
    </source>
</evidence>
<evidence type="ECO:0000303" key="16">
    <source>
    </source>
</evidence>
<evidence type="ECO:0000303" key="17">
    <source>
    </source>
</evidence>
<evidence type="ECO:0000305" key="18"/>
<evidence type="ECO:0000312" key="19">
    <source>
        <dbReference type="HGNC" id="HGNC:21539"/>
    </source>
</evidence>
<protein>
    <recommendedName>
        <fullName evidence="18">RNA-binding protein 24</fullName>
    </recommendedName>
    <alternativeName>
        <fullName evidence="17">RNA-binding motif protein 24</fullName>
    </alternativeName>
    <alternativeName>
        <fullName>RNA-binding region-containing protein 6</fullName>
    </alternativeName>
</protein>
<organism>
    <name type="scientific">Homo sapiens</name>
    <name type="common">Human</name>
    <dbReference type="NCBI Taxonomy" id="9606"/>
    <lineage>
        <taxon>Eukaryota</taxon>
        <taxon>Metazoa</taxon>
        <taxon>Chordata</taxon>
        <taxon>Craniata</taxon>
        <taxon>Vertebrata</taxon>
        <taxon>Euteleostomi</taxon>
        <taxon>Mammalia</taxon>
        <taxon>Eutheria</taxon>
        <taxon>Euarchontoglires</taxon>
        <taxon>Primates</taxon>
        <taxon>Haplorrhini</taxon>
        <taxon>Catarrhini</taxon>
        <taxon>Hominidae</taxon>
        <taxon>Homo</taxon>
    </lineage>
</organism>
<accession>Q9BX46</accession>
<accession>E9PAY4</accession>
<accession>Q6QDA4</accession>
<accession>Q8N9D3</accession>
<accession>Q96NI3</accession>
<feature type="chain" id="PRO_0000273370" description="RNA-binding protein 24">
    <location>
        <begin position="1"/>
        <end position="236"/>
    </location>
</feature>
<feature type="domain" description="RRM" evidence="4">
    <location>
        <begin position="11"/>
        <end position="88"/>
    </location>
</feature>
<feature type="region of interest" description="Necessary for interaction with EIF4E" evidence="13">
    <location>
        <begin position="175"/>
        <end position="199"/>
    </location>
</feature>
<feature type="splice variant" id="VSP_046775" description="In isoform 3." evidence="18">
    <location>
        <begin position="1"/>
        <end position="58"/>
    </location>
</feature>
<feature type="splice variant" id="VSP_022526" description="In isoform 2." evidence="15 16">
    <original>MHTTQKDTTYTKIFVGGLPYHTTDASLRKYFEVFGEIEEAVVITDRQTGKSRGYGF</original>
    <variation>MYVCLCVSVAK</variation>
    <location>
        <begin position="1"/>
        <end position="56"/>
    </location>
</feature>
<feature type="mutagenesis site" description="Decreases p53/TP53 expression." evidence="13">
    <original>S</original>
    <variation>A</variation>
    <location>
        <position position="181"/>
    </location>
</feature>
<feature type="mutagenesis site" description="Increases p53/TP53 expression." evidence="13">
    <original>S</original>
    <variation>D</variation>
    <location>
        <position position="181"/>
    </location>
</feature>
<feature type="sequence conflict" description="In Ref. 1; BAC04474." evidence="18" ref="1">
    <original>A</original>
    <variation>D</variation>
    <location>
        <position position="144"/>
    </location>
</feature>
<proteinExistence type="evidence at protein level"/>